<sequence>MKLSFTKVSLTNILILFNCLFIIFSMIVLTFGVIPQIYLLKFANILHGVRPSIFPIVCFTGSFVIIVACVGIIGLMKGGKCLLTMHIIALIIATIIDISTATLSAIKQNEFLTKAGQVLNDSSKLYYKNRLYATEFDLMHITFKCCNVKNDYSLLGTLHLIPESCTHGIEFYKQQCNEPLNKYVRYYIDILIYLCFIFGFIKLIYSLFTFTQRQRIFSEKTPVA</sequence>
<name>IM25_SCHJA</name>
<dbReference type="EMBL" id="U77941">
    <property type="protein sequence ID" value="AAB88626.1"/>
    <property type="molecule type" value="mRNA"/>
</dbReference>
<dbReference type="SMR" id="P91799"/>
<dbReference type="GO" id="GO:0016020">
    <property type="term" value="C:membrane"/>
    <property type="evidence" value="ECO:0000303"/>
    <property type="project" value="UniProtKB"/>
</dbReference>
<dbReference type="CDD" id="cd03127">
    <property type="entry name" value="tetraspanin_LEL"/>
    <property type="match status" value="1"/>
</dbReference>
<dbReference type="InterPro" id="IPR018499">
    <property type="entry name" value="Tetraspanin/Peripherin"/>
</dbReference>
<dbReference type="InterPro" id="IPR018503">
    <property type="entry name" value="Tetraspanin_CS"/>
</dbReference>
<dbReference type="InterPro" id="IPR008952">
    <property type="entry name" value="Tetraspanin_EC2_sf"/>
</dbReference>
<dbReference type="PANTHER" id="PTHR19282:SF452">
    <property type="entry name" value="LD03691P"/>
    <property type="match status" value="1"/>
</dbReference>
<dbReference type="PANTHER" id="PTHR19282">
    <property type="entry name" value="TETRASPANIN"/>
    <property type="match status" value="1"/>
</dbReference>
<dbReference type="Pfam" id="PF00335">
    <property type="entry name" value="Tetraspanin"/>
    <property type="match status" value="1"/>
</dbReference>
<dbReference type="PRINTS" id="PR00259">
    <property type="entry name" value="TMFOUR"/>
</dbReference>
<dbReference type="SUPFAM" id="SSF48652">
    <property type="entry name" value="Tetraspanin"/>
    <property type="match status" value="1"/>
</dbReference>
<dbReference type="PROSITE" id="PS00421">
    <property type="entry name" value="TM4_1"/>
    <property type="match status" value="1"/>
</dbReference>
<keyword id="KW-0325">Glycoprotein</keyword>
<keyword id="KW-0472">Membrane</keyword>
<keyword id="KW-0812">Transmembrane</keyword>
<keyword id="KW-1133">Transmembrane helix</keyword>
<comment type="subcellular location">
    <subcellularLocation>
        <location>Membrane</location>
        <topology>Multi-pass membrane protein</topology>
    </subcellularLocation>
</comment>
<comment type="developmental stage">
    <text evidence="2">Expressed in both miracidia (larval) and adult worms.</text>
</comment>
<comment type="similarity">
    <text evidence="3">Belongs to the tetraspanin (TM4SF) family.</text>
</comment>
<reference evidence="3" key="1">
    <citation type="journal article" date="1997" name="Biochim. Biophys. Acta">
        <title>A new member of the transmembrane 4 superfamily (TM4SF) of proteins from schistosomes, expressed by larval and adult Schistosoma japonicum.</title>
        <authorList>
            <person name="Fan J."/>
            <person name="Hooker C.W."/>
            <person name="McManus D.P."/>
            <person name="Brindley P.J."/>
        </authorList>
    </citation>
    <scope>NUCLEOTIDE SEQUENCE [MRNA]</scope>
    <scope>DEVELOPMENTAL STAGE</scope>
    <source>
        <strain>Chinese</strain>
    </source>
</reference>
<evidence type="ECO:0000255" key="1"/>
<evidence type="ECO:0000269" key="2">
    <source>
    </source>
</evidence>
<evidence type="ECO:0000305" key="3"/>
<evidence type="ECO:0000312" key="4">
    <source>
        <dbReference type="EMBL" id="AAB88626.1"/>
    </source>
</evidence>
<proteinExistence type="evidence at transcript level"/>
<organism evidence="4">
    <name type="scientific">Schistosoma japonicum</name>
    <name type="common">Blood fluke</name>
    <dbReference type="NCBI Taxonomy" id="6182"/>
    <lineage>
        <taxon>Eukaryota</taxon>
        <taxon>Metazoa</taxon>
        <taxon>Spiralia</taxon>
        <taxon>Lophotrochozoa</taxon>
        <taxon>Platyhelminthes</taxon>
        <taxon>Trematoda</taxon>
        <taxon>Digenea</taxon>
        <taxon>Strigeidida</taxon>
        <taxon>Schistosomatoidea</taxon>
        <taxon>Schistosomatidae</taxon>
        <taxon>Schistosoma</taxon>
    </lineage>
</organism>
<protein>
    <recommendedName>
        <fullName>25 kDa integral membrane protein</fullName>
    </recommendedName>
    <alternativeName>
        <fullName>Sj25</fullName>
    </alternativeName>
    <alternativeName>
        <fullName>Sj25/TM4</fullName>
    </alternativeName>
</protein>
<feature type="chain" id="PRO_0000219283" description="25 kDa integral membrane protein">
    <location>
        <begin position="1"/>
        <end position="224"/>
    </location>
</feature>
<feature type="topological domain" description="Cytoplasmic" evidence="1">
    <location>
        <begin position="1"/>
        <end position="12"/>
    </location>
</feature>
<feature type="transmembrane region" description="Helical" evidence="1">
    <location>
        <begin position="13"/>
        <end position="33"/>
    </location>
</feature>
<feature type="topological domain" description="Extracellular" evidence="1">
    <location>
        <begin position="34"/>
        <end position="52"/>
    </location>
</feature>
<feature type="transmembrane region" description="Helical" evidence="1">
    <location>
        <begin position="53"/>
        <end position="73"/>
    </location>
</feature>
<feature type="topological domain" description="Cytoplasmic" evidence="1">
    <location>
        <begin position="74"/>
        <end position="80"/>
    </location>
</feature>
<feature type="transmembrane region" description="Helical" evidence="1">
    <location>
        <begin position="81"/>
        <end position="101"/>
    </location>
</feature>
<feature type="topological domain" description="Extracellular" evidence="1">
    <location>
        <begin position="102"/>
        <end position="189"/>
    </location>
</feature>
<feature type="transmembrane region" description="Helical" evidence="1">
    <location>
        <begin position="190"/>
        <end position="210"/>
    </location>
</feature>
<feature type="topological domain" description="Cytoplasmic" evidence="1">
    <location>
        <begin position="211"/>
        <end position="224"/>
    </location>
</feature>
<feature type="glycosylation site" description="N-linked (GlcNAc...) asparagine" evidence="1">
    <location>
        <position position="120"/>
    </location>
</feature>
<accession>P91799</accession>